<feature type="chain" id="PRO_0000460928" description="(R)-2-hydroxy-4-methylpentanoate CoA-transferase">
    <location>
        <begin position="1"/>
        <end position="399"/>
    </location>
</feature>
<feature type="active site" description="Nucleophile" evidence="1">
    <location>
        <position position="171"/>
    </location>
</feature>
<feature type="mutagenesis site" description="Loss of activity." evidence="2">
    <original>D</original>
    <variation>A</variation>
    <variation>N</variation>
    <location>
        <position position="171"/>
    </location>
</feature>
<dbReference type="EC" id="2.8.3.24" evidence="2"/>
<dbReference type="EMBL" id="AY772818">
    <property type="protein sequence ID" value="AAV40822.1"/>
    <property type="status" value="ALT_INIT"/>
    <property type="molecule type" value="Genomic_DNA"/>
</dbReference>
<dbReference type="RefSeq" id="WP_003427766.1">
    <property type="nucleotide sequence ID" value="NZ_WUUI01000021.1"/>
</dbReference>
<dbReference type="SMR" id="Q5U921"/>
<dbReference type="GeneID" id="66352920"/>
<dbReference type="OMA" id="IIAGPYC"/>
<dbReference type="BRENDA" id="2.8.3.B1">
    <property type="organism ID" value="1473"/>
</dbReference>
<dbReference type="UniPathway" id="UPA00363"/>
<dbReference type="GO" id="GO:0016740">
    <property type="term" value="F:transferase activity"/>
    <property type="evidence" value="ECO:0007669"/>
    <property type="project" value="UniProtKB-KW"/>
</dbReference>
<dbReference type="Gene3D" id="3.40.50.10540">
    <property type="entry name" value="Crotonobetainyl-coa:carnitine coa-transferase, domain 1"/>
    <property type="match status" value="1"/>
</dbReference>
<dbReference type="Gene3D" id="3.30.1540.10">
    <property type="entry name" value="formyl-coa transferase, domain 3"/>
    <property type="match status" value="1"/>
</dbReference>
<dbReference type="InterPro" id="IPR050509">
    <property type="entry name" value="CoA-transferase_III"/>
</dbReference>
<dbReference type="InterPro" id="IPR003673">
    <property type="entry name" value="CoA-Trfase_fam_III"/>
</dbReference>
<dbReference type="InterPro" id="IPR044855">
    <property type="entry name" value="CoA-Trfase_III_dom3_sf"/>
</dbReference>
<dbReference type="InterPro" id="IPR023606">
    <property type="entry name" value="CoA-Trfase_III_dom_1_sf"/>
</dbReference>
<dbReference type="PANTHER" id="PTHR48228:SF2">
    <property type="entry name" value="E-CINNAMOYL-COA:R-PHENYLLACTATE COA TRANSFERASE LARGE SUBUNIT"/>
    <property type="match status" value="1"/>
</dbReference>
<dbReference type="PANTHER" id="PTHR48228">
    <property type="entry name" value="SUCCINYL-COA--D-CITRAMALATE COA-TRANSFERASE"/>
    <property type="match status" value="1"/>
</dbReference>
<dbReference type="Pfam" id="PF02515">
    <property type="entry name" value="CoA_transf_3"/>
    <property type="match status" value="1"/>
</dbReference>
<dbReference type="SUPFAM" id="SSF89796">
    <property type="entry name" value="CoA-transferase family III (CaiB/BaiF)"/>
    <property type="match status" value="1"/>
</dbReference>
<name>HADA_CLODI</name>
<reference key="1">
    <citation type="journal article" date="2005" name="FEBS J.">
        <title>2-hydroxyisocaproyl-CoA dehydratase and its activator from Clostridium difficile.</title>
        <authorList>
            <person name="Kim J."/>
            <person name="Darley D."/>
            <person name="Buckel W."/>
        </authorList>
    </citation>
    <scope>NUCLEOTIDE SEQUENCE [GENOMIC DNA]</scope>
    <source>
        <strain>ATCC 9689 / DSM 1296 / BCRC 10642 / JCM 1296 / NCIMB 10666 / NCTC 11209 / 90556-M6S</strain>
    </source>
</reference>
<reference key="2">
    <citation type="journal article" date="2006" name="Appl. Environ. Microbiol.">
        <title>Characterization of (R)-2-hydroxyisocaproate dehydrogenase and a family III coenzyme A transferase involved in reduction of L-leucine to isocaproate by Clostridium difficile.</title>
        <authorList>
            <person name="Kim J."/>
            <person name="Darley D."/>
            <person name="Selmer T."/>
            <person name="Buckel W."/>
        </authorList>
    </citation>
    <scope>FUNCTION</scope>
    <scope>CATALYTIC ACTIVITY</scope>
    <scope>SUBUNIT</scope>
    <scope>MUTAGENESIS OF ASP-171</scope>
    <source>
        <strain>ATCC 9689 / DSM 1296 / BCRC 10642 / JCM 1296 / NCIMB 10666 / NCTC 11209 / 90556-M6S</strain>
    </source>
</reference>
<gene>
    <name evidence="3" type="primary">hadA</name>
</gene>
<keyword id="KW-0808">Transferase</keyword>
<proteinExistence type="evidence at protein level"/>
<organism>
    <name type="scientific">Clostridioides difficile</name>
    <name type="common">Peptoclostridium difficile</name>
    <dbReference type="NCBI Taxonomy" id="1496"/>
    <lineage>
        <taxon>Bacteria</taxon>
        <taxon>Bacillati</taxon>
        <taxon>Bacillota</taxon>
        <taxon>Clostridia</taxon>
        <taxon>Peptostreptococcales</taxon>
        <taxon>Peptostreptococcaceae</taxon>
        <taxon>Clostridioides</taxon>
    </lineage>
</organism>
<evidence type="ECO:0000250" key="1">
    <source>
        <dbReference type="UniProtKB" id="Q9HAC7"/>
    </source>
</evidence>
<evidence type="ECO:0000269" key="2">
    <source>
    </source>
</evidence>
<evidence type="ECO:0000303" key="3">
    <source>
    </source>
</evidence>
<evidence type="ECO:0000303" key="4">
    <source>
    </source>
</evidence>
<evidence type="ECO:0000305" key="5"/>
<evidence type="ECO:0000305" key="6">
    <source>
    </source>
</evidence>
<sequence>MLLEGVKVVELSSFIAAPCCAKMLGDWGAEVIKIEPIEGDGIRVMGGTFKSPASDDENPMFELENGNKKGVSINVKSKEGVEILHKLLSEADIFVTNVRVQALEKMGIAYDQIKDKYPGLIFSQILGYGEKGPLKDKPGFDYTAYFARGGVSQSVMEKGTSPANTAAGFGDHYAGLALAAGSLAALHKKAQTGKGERVTVSLFHTAIYGMGTMITTAQYGNEMPLSRENPNSPLMTTYKCKDGRWIQLALIQYNKWLGKFCKVINREYILEDDRYNNIDSMVNHVEDLVKIVGEAMLEKTLDEWSALLEEADLPFEKIQSCEDLLDDEQAWANDFLFKKTYDSGNTGVLVNTPVMFRNEGIKEYTPAPKVGQHTVEVLKSLGYDEEKINNFKDSKVVRY</sequence>
<protein>
    <recommendedName>
        <fullName evidence="5">(R)-2-hydroxy-4-methylpentanoate CoA-transferase</fullName>
        <ecNumber evidence="2">2.8.3.24</ecNumber>
    </recommendedName>
    <alternativeName>
        <fullName evidence="4">2-hydroxyisocaproate-CoA transferase</fullName>
    </alternativeName>
</protein>
<accession>Q5U921</accession>
<comment type="function">
    <text evidence="2">Involved in the reductive branch of L-leucine fermentation (PubMed:16957230). Catalyzes the transfer of the CoA moiety from 4-methylpentanoyl-CoA (isocaproyl-CoA) to (R)-2-hydroxy-4-methylpentanoate ((R)-2-hydroxyisocaproate), leading to the formation of (R)-2-hydroxy-4-methylpentanoyl-CoA (PubMed:16957230). Other CoA thioesters, such as acetyl-CoA or butyryl-CoA, are not accepted as substrates (PubMed:16957230).</text>
</comment>
<comment type="catalytic activity">
    <reaction evidence="2">
        <text>4-methylpentanoyl-CoA + (2R)-hydroxy-4-methylpentanoate = (R)-2-hydroxy-4-methylpentanoyl-CoA + 4-methylpentanoate</text>
        <dbReference type="Rhea" id="RHEA:49440"/>
        <dbReference type="ChEBI" id="CHEBI:55535"/>
        <dbReference type="ChEBI" id="CHEBI:74904"/>
        <dbReference type="ChEBI" id="CHEBI:87119"/>
        <dbReference type="ChEBI" id="CHEBI:131445"/>
        <dbReference type="EC" id="2.8.3.24"/>
    </reaction>
    <physiologicalReaction direction="left-to-right" evidence="2">
        <dbReference type="Rhea" id="RHEA:49441"/>
    </physiologicalReaction>
</comment>
<comment type="pathway">
    <text evidence="6">Amino-acid degradation; L-leucine degradation.</text>
</comment>
<comment type="subunit">
    <text evidence="2">Homodimer.</text>
</comment>
<comment type="similarity">
    <text evidence="5">Belongs to the CoA-transferase III family.</text>
</comment>
<comment type="sequence caution" evidence="5">
    <conflict type="erroneous initiation">
        <sequence resource="EMBL-CDS" id="AAV40822"/>
    </conflict>
    <text>Truncated N-terminus.</text>
</comment>